<proteinExistence type="inferred from homology"/>
<sequence length="221" mass="24292">MEPLTHPLLDEATVSQLRATLLADETSWQDGRKTAGYQAAEVKNNLQLDRNSKTAKENSQLVIKQLESDPLVKSFALPRHIHGVMFSRSGIGQGYGMHVDNAYMSSGRSDLSFTLFLNEPESYEGGALCIQTLQDSKQVKLPAGQVIIYPSTSLHAVETVTAGERLVCVGWIQSYISSNEDRTILFGLNAGARALLAEHGRSPELDLIFQAYTNLLRRLGS</sequence>
<accession>Q7V8P9</accession>
<feature type="chain" id="PRO_0000346505" description="PKHD-type hydroxylase PMT_0286">
    <location>
        <begin position="1"/>
        <end position="221"/>
    </location>
</feature>
<feature type="domain" description="Fe2OG dioxygenase" evidence="1">
    <location>
        <begin position="80"/>
        <end position="174"/>
    </location>
</feature>
<feature type="binding site" evidence="1">
    <location>
        <position position="98"/>
    </location>
    <ligand>
        <name>Fe cation</name>
        <dbReference type="ChEBI" id="CHEBI:24875"/>
    </ligand>
</feature>
<feature type="binding site" evidence="1">
    <location>
        <position position="100"/>
    </location>
    <ligand>
        <name>Fe cation</name>
        <dbReference type="ChEBI" id="CHEBI:24875"/>
    </ligand>
</feature>
<feature type="binding site" evidence="1">
    <location>
        <position position="155"/>
    </location>
    <ligand>
        <name>Fe cation</name>
        <dbReference type="ChEBI" id="CHEBI:24875"/>
    </ligand>
</feature>
<feature type="binding site" evidence="1">
    <location>
        <position position="165"/>
    </location>
    <ligand>
        <name>2-oxoglutarate</name>
        <dbReference type="ChEBI" id="CHEBI:16810"/>
    </ligand>
</feature>
<comment type="cofactor">
    <cofactor evidence="1">
        <name>Fe(2+)</name>
        <dbReference type="ChEBI" id="CHEBI:29033"/>
    </cofactor>
    <text evidence="1">Binds 1 Fe(2+) ion per subunit.</text>
</comment>
<comment type="cofactor">
    <cofactor evidence="1">
        <name>L-ascorbate</name>
        <dbReference type="ChEBI" id="CHEBI:38290"/>
    </cofactor>
</comment>
<protein>
    <recommendedName>
        <fullName evidence="1">PKHD-type hydroxylase PMT_0286</fullName>
        <ecNumber evidence="1">1.14.11.-</ecNumber>
    </recommendedName>
</protein>
<evidence type="ECO:0000255" key="1">
    <source>
        <dbReference type="HAMAP-Rule" id="MF_00657"/>
    </source>
</evidence>
<keyword id="KW-0223">Dioxygenase</keyword>
<keyword id="KW-0408">Iron</keyword>
<keyword id="KW-0479">Metal-binding</keyword>
<keyword id="KW-0560">Oxidoreductase</keyword>
<keyword id="KW-1185">Reference proteome</keyword>
<keyword id="KW-0847">Vitamin C</keyword>
<organism>
    <name type="scientific">Prochlorococcus marinus (strain MIT 9313)</name>
    <dbReference type="NCBI Taxonomy" id="74547"/>
    <lineage>
        <taxon>Bacteria</taxon>
        <taxon>Bacillati</taxon>
        <taxon>Cyanobacteriota</taxon>
        <taxon>Cyanophyceae</taxon>
        <taxon>Synechococcales</taxon>
        <taxon>Prochlorococcaceae</taxon>
        <taxon>Prochlorococcus</taxon>
    </lineage>
</organism>
<reference key="1">
    <citation type="journal article" date="2003" name="Nature">
        <title>Genome divergence in two Prochlorococcus ecotypes reflects oceanic niche differentiation.</title>
        <authorList>
            <person name="Rocap G."/>
            <person name="Larimer F.W."/>
            <person name="Lamerdin J.E."/>
            <person name="Malfatti S."/>
            <person name="Chain P."/>
            <person name="Ahlgren N.A."/>
            <person name="Arellano A."/>
            <person name="Coleman M."/>
            <person name="Hauser L."/>
            <person name="Hess W.R."/>
            <person name="Johnson Z.I."/>
            <person name="Land M.L."/>
            <person name="Lindell D."/>
            <person name="Post A.F."/>
            <person name="Regala W."/>
            <person name="Shah M."/>
            <person name="Shaw S.L."/>
            <person name="Steglich C."/>
            <person name="Sullivan M.B."/>
            <person name="Ting C.S."/>
            <person name="Tolonen A."/>
            <person name="Webb E.A."/>
            <person name="Zinser E.R."/>
            <person name="Chisholm S.W."/>
        </authorList>
    </citation>
    <scope>NUCLEOTIDE SEQUENCE [LARGE SCALE GENOMIC DNA]</scope>
    <source>
        <strain>MIT 9313</strain>
    </source>
</reference>
<gene>
    <name type="ordered locus">PMT_0286</name>
</gene>
<name>Y286_PROMM</name>
<dbReference type="EC" id="1.14.11.-" evidence="1"/>
<dbReference type="EMBL" id="BX548175">
    <property type="protein sequence ID" value="CAE20461.1"/>
    <property type="molecule type" value="Genomic_DNA"/>
</dbReference>
<dbReference type="RefSeq" id="WP_011129665.1">
    <property type="nucleotide sequence ID" value="NC_005071.1"/>
</dbReference>
<dbReference type="SMR" id="Q7V8P9"/>
<dbReference type="DNASU" id="1729758"/>
<dbReference type="KEGG" id="pmt:PMT_0286"/>
<dbReference type="eggNOG" id="COG3128">
    <property type="taxonomic scope" value="Bacteria"/>
</dbReference>
<dbReference type="HOGENOM" id="CLU_106663_0_0_3"/>
<dbReference type="OrthoDB" id="9812472at2"/>
<dbReference type="Proteomes" id="UP000001423">
    <property type="component" value="Chromosome"/>
</dbReference>
<dbReference type="GO" id="GO:0016706">
    <property type="term" value="F:2-oxoglutarate-dependent dioxygenase activity"/>
    <property type="evidence" value="ECO:0007669"/>
    <property type="project" value="UniProtKB-UniRule"/>
</dbReference>
<dbReference type="GO" id="GO:0005506">
    <property type="term" value="F:iron ion binding"/>
    <property type="evidence" value="ECO:0007669"/>
    <property type="project" value="UniProtKB-UniRule"/>
</dbReference>
<dbReference type="GO" id="GO:0031418">
    <property type="term" value="F:L-ascorbic acid binding"/>
    <property type="evidence" value="ECO:0007669"/>
    <property type="project" value="UniProtKB-KW"/>
</dbReference>
<dbReference type="GO" id="GO:0006974">
    <property type="term" value="P:DNA damage response"/>
    <property type="evidence" value="ECO:0007669"/>
    <property type="project" value="TreeGrafter"/>
</dbReference>
<dbReference type="GO" id="GO:0006879">
    <property type="term" value="P:intracellular iron ion homeostasis"/>
    <property type="evidence" value="ECO:0007669"/>
    <property type="project" value="TreeGrafter"/>
</dbReference>
<dbReference type="Gene3D" id="2.60.120.620">
    <property type="entry name" value="q2cbj1_9rhob like domain"/>
    <property type="match status" value="1"/>
</dbReference>
<dbReference type="Gene3D" id="4.10.860.20">
    <property type="entry name" value="Rabenosyn, Rab binding domain"/>
    <property type="match status" value="1"/>
</dbReference>
<dbReference type="HAMAP" id="MF_00657">
    <property type="entry name" value="Hydroxyl_YbiX"/>
    <property type="match status" value="1"/>
</dbReference>
<dbReference type="InterPro" id="IPR005123">
    <property type="entry name" value="Oxoglu/Fe-dep_dioxygenase_dom"/>
</dbReference>
<dbReference type="InterPro" id="IPR023550">
    <property type="entry name" value="PKHD_hydroxylase"/>
</dbReference>
<dbReference type="InterPro" id="IPR006620">
    <property type="entry name" value="Pro_4_hyd_alph"/>
</dbReference>
<dbReference type="InterPro" id="IPR044862">
    <property type="entry name" value="Pro_4_hyd_alph_FE2OG_OXY"/>
</dbReference>
<dbReference type="NCBIfam" id="NF003974">
    <property type="entry name" value="PRK05467.1-3"/>
    <property type="match status" value="1"/>
</dbReference>
<dbReference type="NCBIfam" id="NF003975">
    <property type="entry name" value="PRK05467.1-4"/>
    <property type="match status" value="1"/>
</dbReference>
<dbReference type="PANTHER" id="PTHR41536">
    <property type="entry name" value="PKHD-TYPE HYDROXYLASE YBIX"/>
    <property type="match status" value="1"/>
</dbReference>
<dbReference type="PANTHER" id="PTHR41536:SF1">
    <property type="entry name" value="PKHD-TYPE HYDROXYLASE YBIX"/>
    <property type="match status" value="1"/>
</dbReference>
<dbReference type="Pfam" id="PF13640">
    <property type="entry name" value="2OG-FeII_Oxy_3"/>
    <property type="match status" value="1"/>
</dbReference>
<dbReference type="SMART" id="SM00702">
    <property type="entry name" value="P4Hc"/>
    <property type="match status" value="1"/>
</dbReference>
<dbReference type="PROSITE" id="PS51471">
    <property type="entry name" value="FE2OG_OXY"/>
    <property type="match status" value="1"/>
</dbReference>